<organism>
    <name type="scientific">Shigella sonnei</name>
    <dbReference type="NCBI Taxonomy" id="624"/>
    <lineage>
        <taxon>Bacteria</taxon>
        <taxon>Pseudomonadati</taxon>
        <taxon>Pseudomonadota</taxon>
        <taxon>Gammaproteobacteria</taxon>
        <taxon>Enterobacterales</taxon>
        <taxon>Enterobacteriaceae</taxon>
        <taxon>Shigella</taxon>
    </lineage>
</organism>
<proteinExistence type="inferred from homology"/>
<sequence>MEGFFFVRNQNIKFSDNVNYHYRFNINSCAKFLAFWDYFSGALVEHSHAEKCIHFYHENDLRDSCNTESMLDKLMLRFIFSSDQNVSNALAMIRMTESYHLVLYLLRTIEKEKEVRIKSLTEHYGVSEAYFRSLCRKALGAKVKEQLNTWRLVNGLLDVFLHNQTITSAAMNNGYASTSHFSNEIKTRLGFSARELSNITFLVKKINEKI</sequence>
<accession>P0A2S8</accession>
<accession>Q04642</accession>
<accession>Q55292</accession>
<name>MXIE_SHISO</name>
<keyword id="KW-0238">DNA-binding</keyword>
<keyword id="KW-0614">Plasmid</keyword>
<keyword id="KW-0804">Transcription</keyword>
<keyword id="KW-0805">Transcription regulation</keyword>
<keyword id="KW-0813">Transport</keyword>
<keyword id="KW-0843">Virulence</keyword>
<reference key="1">
    <citation type="submission" date="1995-05" db="EMBL/GenBank/DDBJ databases">
        <title>Comparison and high conservation of nucleotide sequences of spa-mxi regions between S.sonnei and S.flexneri -- identification of a new gene coding plausible membrane protein.</title>
        <authorList>
            <person name="Arakawa E."/>
            <person name="Kato J."/>
            <person name="Ito K."/>
            <person name="Watanabe H."/>
        </authorList>
    </citation>
    <scope>NUCLEOTIDE SEQUENCE [GENOMIC DNA]</scope>
    <source>
        <strain>HW383</strain>
    </source>
</reference>
<geneLocation type="plasmid">
    <name>pINV</name>
</geneLocation>
<dbReference type="EMBL" id="D50601">
    <property type="protein sequence ID" value="BAA09153.1"/>
    <property type="molecule type" value="Genomic_DNA"/>
</dbReference>
<dbReference type="RefSeq" id="WP_000398259.1">
    <property type="nucleotide sequence ID" value="NZ_WHSK01000249.1"/>
</dbReference>
<dbReference type="SMR" id="P0A2S8"/>
<dbReference type="STRING" id="216599.GCA_000283715_05235"/>
<dbReference type="OMA" id="WDIEILP"/>
<dbReference type="GO" id="GO:0003700">
    <property type="term" value="F:DNA-binding transcription factor activity"/>
    <property type="evidence" value="ECO:0007669"/>
    <property type="project" value="InterPro"/>
</dbReference>
<dbReference type="GO" id="GO:0043565">
    <property type="term" value="F:sequence-specific DNA binding"/>
    <property type="evidence" value="ECO:0007669"/>
    <property type="project" value="InterPro"/>
</dbReference>
<dbReference type="Gene3D" id="1.10.10.60">
    <property type="entry name" value="Homeodomain-like"/>
    <property type="match status" value="1"/>
</dbReference>
<dbReference type="InterPro" id="IPR018060">
    <property type="entry name" value="HTH_AraC"/>
</dbReference>
<dbReference type="InterPro" id="IPR018062">
    <property type="entry name" value="HTH_AraC-typ_CS"/>
</dbReference>
<dbReference type="Pfam" id="PF12833">
    <property type="entry name" value="HTH_18"/>
    <property type="match status" value="1"/>
</dbReference>
<dbReference type="SMART" id="SM00342">
    <property type="entry name" value="HTH_ARAC"/>
    <property type="match status" value="1"/>
</dbReference>
<dbReference type="PROSITE" id="PS00041">
    <property type="entry name" value="HTH_ARAC_FAMILY_1"/>
    <property type="match status" value="1"/>
</dbReference>
<dbReference type="PROSITE" id="PS01124">
    <property type="entry name" value="HTH_ARAC_FAMILY_2"/>
    <property type="match status" value="1"/>
</dbReference>
<protein>
    <recommendedName>
        <fullName>Transcriptional regulator MxiE</fullName>
    </recommendedName>
</protein>
<comment type="function">
    <text evidence="1">Necessary for the secretion of ipa invasins. Probable transcriptional regulatory protein (By similarity).</text>
</comment>
<feature type="chain" id="PRO_0000194542" description="Transcriptional regulator MxiE">
    <location>
        <begin position="1"/>
        <end position="210"/>
    </location>
</feature>
<feature type="domain" description="HTH araC/xylS-type" evidence="2">
    <location>
        <begin position="99"/>
        <end position="199"/>
    </location>
</feature>
<feature type="DNA-binding region" description="H-T-H motif" evidence="2">
    <location>
        <begin position="118"/>
        <end position="139"/>
    </location>
</feature>
<feature type="DNA-binding region" description="H-T-H motif" evidence="2">
    <location>
        <begin position="166"/>
        <end position="189"/>
    </location>
</feature>
<evidence type="ECO:0000250" key="1"/>
<evidence type="ECO:0000255" key="2">
    <source>
        <dbReference type="PROSITE-ProRule" id="PRU00593"/>
    </source>
</evidence>
<gene>
    <name type="primary">mxiE</name>
</gene>